<reference key="1">
    <citation type="journal article" date="2010" name="PLoS ONE">
        <title>The complete genome sequence of Haloferax volcanii DS2, a model archaeon.</title>
        <authorList>
            <person name="Hartman A.L."/>
            <person name="Norais C."/>
            <person name="Badger J.H."/>
            <person name="Delmas S."/>
            <person name="Haldenby S."/>
            <person name="Madupu R."/>
            <person name="Robinson J."/>
            <person name="Khouri H."/>
            <person name="Ren Q."/>
            <person name="Lowe T.M."/>
            <person name="Maupin-Furlow J."/>
            <person name="Pohlschroder M."/>
            <person name="Daniels C."/>
            <person name="Pfeiffer F."/>
            <person name="Allers T."/>
            <person name="Eisen J.A."/>
        </authorList>
    </citation>
    <scope>NUCLEOTIDE SEQUENCE [LARGE SCALE GENOMIC DNA]</scope>
    <source>
        <strain>ATCC 29605 / DSM 3757 / JCM 8879 / NBRC 14742 / NCIMB 2012 / VKM B-1768 / DS2</strain>
    </source>
</reference>
<reference key="2">
    <citation type="journal article" date="2014" name="PLoS Genet.">
        <title>Phylogenetically driven sequencing of extremely halophilic archaea reveals strategies for static and dynamic osmo-response.</title>
        <authorList>
            <person name="Becker E.A."/>
            <person name="Seitzer P.M."/>
            <person name="Tritt A."/>
            <person name="Larsen D."/>
            <person name="Krusor M."/>
            <person name="Yao A.I."/>
            <person name="Wu D."/>
            <person name="Madern D."/>
            <person name="Eisen J.A."/>
            <person name="Darling A.E."/>
            <person name="Facciotti M.T."/>
        </authorList>
    </citation>
    <scope>NUCLEOTIDE SEQUENCE [LARGE SCALE GENOMIC DNA]</scope>
    <source>
        <strain>ATCC 29605 / DSM 3757 / JCM 8879 / NBRC 14742 / NCIMB 2012 / VKM B-1768 / DS2</strain>
    </source>
</reference>
<reference key="3">
    <citation type="journal article" date="2013" name="MBio">
        <title>Two distinct N-glycosylation pathways process the Haloferax volcanii S-layer glycoprotein upon changes in environmental salinity.</title>
        <authorList>
            <person name="Kaminski L."/>
            <person name="Guan Z."/>
            <person name="Yurist-Doutsch S."/>
            <person name="Eichler J."/>
        </authorList>
    </citation>
    <scope>FUNCTION</scope>
    <scope>PATHWAY</scope>
    <scope>DISRUPTION PHENOTYPE</scope>
    <source>
        <strain>ATCC 29605 / DSM 3757 / JCM 8879 / NBRC 14742 / NCIMB 2012 / VKM B-1768 / DS2</strain>
    </source>
</reference>
<feature type="chain" id="PRO_0000428770" description="Low-salt glycan biosynthesis hexosyltransferase Agl6">
    <location>
        <begin position="1"/>
        <end position="413"/>
    </location>
</feature>
<feature type="transmembrane region" description="Helical" evidence="1">
    <location>
        <begin position="270"/>
        <end position="290"/>
    </location>
</feature>
<feature type="transmembrane region" description="Helical" evidence="1">
    <location>
        <begin position="304"/>
        <end position="324"/>
    </location>
</feature>
<feature type="transmembrane region" description="Helical" evidence="1">
    <location>
        <begin position="355"/>
        <end position="375"/>
    </location>
</feature>
<feature type="transmembrane region" description="Helical" evidence="1">
    <location>
        <begin position="389"/>
        <end position="409"/>
    </location>
</feature>
<feature type="region of interest" description="Disordered" evidence="2">
    <location>
        <begin position="1"/>
        <end position="27"/>
    </location>
</feature>
<feature type="compositionally biased region" description="Polar residues" evidence="2">
    <location>
        <begin position="16"/>
        <end position="25"/>
    </location>
</feature>
<proteinExistence type="inferred from homology"/>
<dbReference type="EC" id="2.4.1.-"/>
<dbReference type="EMBL" id="CP001956">
    <property type="protein sequence ID" value="ADE02267.1"/>
    <property type="molecule type" value="Genomic_DNA"/>
</dbReference>
<dbReference type="EMBL" id="AOHU01000040">
    <property type="protein sequence ID" value="ELY33655.1"/>
    <property type="molecule type" value="Genomic_DNA"/>
</dbReference>
<dbReference type="RefSeq" id="WP_004041946.1">
    <property type="nucleotide sequence ID" value="NC_013967.1"/>
</dbReference>
<dbReference type="STRING" id="309800.HVO_2061"/>
<dbReference type="CAZy" id="GT2">
    <property type="family name" value="Glycosyltransferase Family 2"/>
</dbReference>
<dbReference type="PaxDb" id="309800-C498_05593"/>
<dbReference type="EnsemblBacteria" id="ADE02267">
    <property type="protein sequence ID" value="ADE02267"/>
    <property type="gene ID" value="HVO_2061"/>
</dbReference>
<dbReference type="GeneID" id="8926118"/>
<dbReference type="KEGG" id="hvo:HVO_2061"/>
<dbReference type="PATRIC" id="fig|309800.29.peg.1085"/>
<dbReference type="eggNOG" id="arCOG00894">
    <property type="taxonomic scope" value="Archaea"/>
</dbReference>
<dbReference type="eggNOG" id="arCOG01910">
    <property type="taxonomic scope" value="Archaea"/>
</dbReference>
<dbReference type="HOGENOM" id="CLU_033536_4_0_2"/>
<dbReference type="OrthoDB" id="147253at2157"/>
<dbReference type="UniPathway" id="UPA00378"/>
<dbReference type="UniPathway" id="UPA00977"/>
<dbReference type="Proteomes" id="UP000008243">
    <property type="component" value="Chromosome"/>
</dbReference>
<dbReference type="Proteomes" id="UP000011532">
    <property type="component" value="Unassembled WGS sequence"/>
</dbReference>
<dbReference type="GO" id="GO:0016020">
    <property type="term" value="C:membrane"/>
    <property type="evidence" value="ECO:0007669"/>
    <property type="project" value="UniProtKB-SubCell"/>
</dbReference>
<dbReference type="GO" id="GO:0016757">
    <property type="term" value="F:glycosyltransferase activity"/>
    <property type="evidence" value="ECO:0007669"/>
    <property type="project" value="UniProtKB-KW"/>
</dbReference>
<dbReference type="GO" id="GO:0006486">
    <property type="term" value="P:protein glycosylation"/>
    <property type="evidence" value="ECO:0007669"/>
    <property type="project" value="UniProtKB-UniPathway"/>
</dbReference>
<dbReference type="GO" id="GO:0045232">
    <property type="term" value="P:S-layer organization"/>
    <property type="evidence" value="ECO:0007669"/>
    <property type="project" value="UniProtKB-UniPathway"/>
</dbReference>
<dbReference type="CDD" id="cd04179">
    <property type="entry name" value="DPM_DPG-synthase_like"/>
    <property type="match status" value="1"/>
</dbReference>
<dbReference type="Gene3D" id="3.90.550.10">
    <property type="entry name" value="Spore Coat Polysaccharide Biosynthesis Protein SpsA, Chain A"/>
    <property type="match status" value="1"/>
</dbReference>
<dbReference type="InterPro" id="IPR001173">
    <property type="entry name" value="Glyco_trans_2-like"/>
</dbReference>
<dbReference type="InterPro" id="IPR050256">
    <property type="entry name" value="Glycosyltransferase_2"/>
</dbReference>
<dbReference type="InterPro" id="IPR029044">
    <property type="entry name" value="Nucleotide-diphossugar_trans"/>
</dbReference>
<dbReference type="PANTHER" id="PTHR48090:SF7">
    <property type="entry name" value="RFBJ PROTEIN"/>
    <property type="match status" value="1"/>
</dbReference>
<dbReference type="PANTHER" id="PTHR48090">
    <property type="entry name" value="UNDECAPRENYL-PHOSPHATE 4-DEOXY-4-FORMAMIDO-L-ARABINOSE TRANSFERASE-RELATED"/>
    <property type="match status" value="1"/>
</dbReference>
<dbReference type="Pfam" id="PF00535">
    <property type="entry name" value="Glycos_transf_2"/>
    <property type="match status" value="1"/>
</dbReference>
<dbReference type="SUPFAM" id="SSF53448">
    <property type="entry name" value="Nucleotide-diphospho-sugar transferases"/>
    <property type="match status" value="1"/>
</dbReference>
<accession>D4GU74</accession>
<keyword id="KW-0328">Glycosyltransferase</keyword>
<keyword id="KW-0472">Membrane</keyword>
<keyword id="KW-1185">Reference proteome</keyword>
<keyword id="KW-0808">Transferase</keyword>
<keyword id="KW-0812">Transmembrane</keyword>
<keyword id="KW-1133">Transmembrane helix</keyword>
<comment type="function">
    <text evidence="3">Hexosyltransferase involved in N-glycan biosynthetic pathway that takes place under low-salt conditions (1.75 M instead of 3.4 M). Participates in the formation of the tetrasaccharide present at 'Asn-532' of S-layer glycoprotein Csg, consisting of a sulfated hexose, 2 hexoses and rhamnose. Together with Agl5, mediates the addition of sugars 1 and 2 to dolichol phosphate in the tetrasaccharide.</text>
</comment>
<comment type="pathway">
    <text evidence="3">Protein modification; protein glycosylation.</text>
</comment>
<comment type="pathway">
    <text evidence="3">Cell surface structure biogenesis; S-layer biogenesis.</text>
</comment>
<comment type="subcellular location">
    <subcellularLocation>
        <location evidence="4">Membrane</location>
        <topology evidence="4">Multi-pass membrane protein</topology>
    </subcellularLocation>
</comment>
<comment type="disruption phenotype">
    <text evidence="3">Abolishes formation of the tetrasaccharide present at 'Asn-532' of S-layer glycoprotein Csg. No effect on 'Asn-47' and 'Asn-117' glycosylation of S-layer glycoprotein Csg.</text>
</comment>
<comment type="similarity">
    <text evidence="4">Belongs to the glycosyltransferase 2 family.</text>
</comment>
<evidence type="ECO:0000255" key="1"/>
<evidence type="ECO:0000256" key="2">
    <source>
        <dbReference type="SAM" id="MobiDB-lite"/>
    </source>
</evidence>
<evidence type="ECO:0000269" key="3">
    <source>
    </source>
</evidence>
<evidence type="ECO:0000305" key="4"/>
<gene>
    <name type="primary">agl6</name>
    <name type="ordered locus">HVO_2061</name>
    <name type="ORF">C498_05593</name>
</gene>
<organism>
    <name type="scientific">Haloferax volcanii (strain ATCC 29605 / DSM 3757 / JCM 8879 / NBRC 14742 / NCIMB 2012 / VKM B-1768 / DS2)</name>
    <name type="common">Halobacterium volcanii</name>
    <dbReference type="NCBI Taxonomy" id="309800"/>
    <lineage>
        <taxon>Archaea</taxon>
        <taxon>Methanobacteriati</taxon>
        <taxon>Methanobacteriota</taxon>
        <taxon>Stenosarchaea group</taxon>
        <taxon>Halobacteria</taxon>
        <taxon>Halobacteriales</taxon>
        <taxon>Haloferacaceae</taxon>
        <taxon>Haloferax</taxon>
    </lineage>
</organism>
<protein>
    <recommendedName>
        <fullName>Low-salt glycan biosynthesis hexosyltransferase Agl6</fullName>
        <ecNumber>2.4.1.-</ecNumber>
    </recommendedName>
    <alternativeName>
        <fullName>Archaeal glycosylation protein 6</fullName>
    </alternativeName>
</protein>
<name>AGL6_HALVD</name>
<sequence length="413" mass="43811">MSTRSQSESPVDAPQQGATNGQSASDIHHSGDELLLSADSDIAPTLSVVMPTLNEEGGIAQCIEWVKAALEDMQIYGEVVVADSSTDRTPEIAAENGAIVIEPDGKGYGYAYLYAFERVRGDYIAMGDADCTYDFEELPKLLNMVRSGDADMAMGSRLEGEILPGSMPPLHEHVGNPLLTKFLNVFYGAGVSDAHSGMRVFSRDAWETMDCSSTGMEFASEMIMEAGAKDLEIKEKPITYHPREGEANLESFPDGWRHVRFMLVNAPGYLFSAPGFGLSVIGVLALVLAWSGVEVGGAQFGIHTGIGGGLLTLAGFQLMLFGAFSTVSSDPVRGASDPFTTWFTERISLERGATIGSVVLLCGLAYGGLLAFTWVTSGFSALPIAVADVVATVAVVIGLQMVFGSFLLGSLGE</sequence>